<reference key="1">
    <citation type="journal article" date="2004" name="Genome Res.">
        <title>The status, quality, and expansion of the NIH full-length cDNA project: the Mammalian Gene Collection (MGC).</title>
        <authorList>
            <consortium name="The MGC Project Team"/>
        </authorList>
    </citation>
    <scope>NUCLEOTIDE SEQUENCE [LARGE SCALE MRNA]</scope>
    <source>
        <tissue>Prostate</tissue>
    </source>
</reference>
<protein>
    <recommendedName>
        <fullName evidence="7">WASH complex subunit 1</fullName>
    </recommendedName>
    <alternativeName>
        <fullName>WAS protein family homolog 1</fullName>
    </alternativeName>
</protein>
<evidence type="ECO:0000250" key="1">
    <source>
        <dbReference type="UniProtKB" id="A8K0Z3"/>
    </source>
</evidence>
<evidence type="ECO:0000250" key="2">
    <source>
        <dbReference type="UniProtKB" id="C4AMC7"/>
    </source>
</evidence>
<evidence type="ECO:0000250" key="3">
    <source>
        <dbReference type="UniProtKB" id="Q8VDD8"/>
    </source>
</evidence>
<evidence type="ECO:0000255" key="4">
    <source>
        <dbReference type="PROSITE-ProRule" id="PRU00406"/>
    </source>
</evidence>
<evidence type="ECO:0000256" key="5">
    <source>
        <dbReference type="SAM" id="MobiDB-lite"/>
    </source>
</evidence>
<evidence type="ECO:0000305" key="6"/>
<evidence type="ECO:0000312" key="7">
    <source>
        <dbReference type="RGD" id="1310196"/>
    </source>
</evidence>
<organism>
    <name type="scientific">Rattus norvegicus</name>
    <name type="common">Rat</name>
    <dbReference type="NCBI Taxonomy" id="10116"/>
    <lineage>
        <taxon>Eukaryota</taxon>
        <taxon>Metazoa</taxon>
        <taxon>Chordata</taxon>
        <taxon>Craniata</taxon>
        <taxon>Vertebrata</taxon>
        <taxon>Euteleostomi</taxon>
        <taxon>Mammalia</taxon>
        <taxon>Eutheria</taxon>
        <taxon>Euarchontoglires</taxon>
        <taxon>Glires</taxon>
        <taxon>Rodentia</taxon>
        <taxon>Myomorpha</taxon>
        <taxon>Muroidea</taxon>
        <taxon>Muridae</taxon>
        <taxon>Murinae</taxon>
        <taxon>Rattus</taxon>
    </lineage>
</organism>
<dbReference type="EMBL" id="BC166761">
    <property type="protein sequence ID" value="AAI66761.1"/>
    <property type="molecule type" value="mRNA"/>
</dbReference>
<dbReference type="RefSeq" id="NP_001120862.1">
    <property type="nucleotide sequence ID" value="NM_001127390.1"/>
</dbReference>
<dbReference type="SMR" id="B2RYF7"/>
<dbReference type="FunCoup" id="B2RYF7">
    <property type="interactions" value="401"/>
</dbReference>
<dbReference type="IntAct" id="B2RYF7">
    <property type="interactions" value="6"/>
</dbReference>
<dbReference type="STRING" id="10116.ENSRNOP00000073916"/>
<dbReference type="GlyGen" id="B2RYF7">
    <property type="glycosylation" value="1 site"/>
</dbReference>
<dbReference type="PhosphoSitePlus" id="B2RYF7"/>
<dbReference type="PaxDb" id="10116-ENSRNOP00000016588"/>
<dbReference type="PeptideAtlas" id="B2RYF7"/>
<dbReference type="GeneID" id="367328"/>
<dbReference type="KEGG" id="rno:367328"/>
<dbReference type="UCSC" id="RGD:1310196">
    <property type="organism name" value="rat"/>
</dbReference>
<dbReference type="AGR" id="RGD:1310196"/>
<dbReference type="CTD" id="100287171"/>
<dbReference type="RGD" id="1310196">
    <property type="gene designation" value="Washc1"/>
</dbReference>
<dbReference type="eggNOG" id="KOG1366">
    <property type="taxonomic scope" value="Eukaryota"/>
</dbReference>
<dbReference type="InParanoid" id="B2RYF7"/>
<dbReference type="OrthoDB" id="307871at2759"/>
<dbReference type="PhylomeDB" id="B2RYF7"/>
<dbReference type="PRO" id="PR:B2RYF7"/>
<dbReference type="Proteomes" id="UP000002494">
    <property type="component" value="Unplaced"/>
</dbReference>
<dbReference type="GO" id="GO:0005776">
    <property type="term" value="C:autophagosome"/>
    <property type="evidence" value="ECO:0000266"/>
    <property type="project" value="RGD"/>
</dbReference>
<dbReference type="GO" id="GO:0031083">
    <property type="term" value="C:BLOC-1 complex"/>
    <property type="evidence" value="ECO:0000266"/>
    <property type="project" value="RGD"/>
</dbReference>
<dbReference type="GO" id="GO:0005813">
    <property type="term" value="C:centrosome"/>
    <property type="evidence" value="ECO:0000266"/>
    <property type="project" value="RGD"/>
</dbReference>
<dbReference type="GO" id="GO:0005829">
    <property type="term" value="C:cytosol"/>
    <property type="evidence" value="ECO:0007669"/>
    <property type="project" value="GOC"/>
</dbReference>
<dbReference type="GO" id="GO:0005769">
    <property type="term" value="C:early endosome"/>
    <property type="evidence" value="ECO:0000250"/>
    <property type="project" value="UniProtKB"/>
</dbReference>
<dbReference type="GO" id="GO:0031901">
    <property type="term" value="C:early endosome membrane"/>
    <property type="evidence" value="ECO:0007669"/>
    <property type="project" value="UniProtKB-SubCell"/>
</dbReference>
<dbReference type="GO" id="GO:0005768">
    <property type="term" value="C:endosome"/>
    <property type="evidence" value="ECO:0000266"/>
    <property type="project" value="RGD"/>
</dbReference>
<dbReference type="GO" id="GO:0000145">
    <property type="term" value="C:exocyst"/>
    <property type="evidence" value="ECO:0000266"/>
    <property type="project" value="RGD"/>
</dbReference>
<dbReference type="GO" id="GO:0030175">
    <property type="term" value="C:filopodium"/>
    <property type="evidence" value="ECO:0000266"/>
    <property type="project" value="RGD"/>
</dbReference>
<dbReference type="GO" id="GO:0030027">
    <property type="term" value="C:lamellipodium"/>
    <property type="evidence" value="ECO:0000266"/>
    <property type="project" value="RGD"/>
</dbReference>
<dbReference type="GO" id="GO:0005770">
    <property type="term" value="C:late endosome"/>
    <property type="evidence" value="ECO:0000266"/>
    <property type="project" value="RGD"/>
</dbReference>
<dbReference type="GO" id="GO:0055037">
    <property type="term" value="C:recycling endosome"/>
    <property type="evidence" value="ECO:0000250"/>
    <property type="project" value="UniProtKB"/>
</dbReference>
<dbReference type="GO" id="GO:0055038">
    <property type="term" value="C:recycling endosome membrane"/>
    <property type="evidence" value="ECO:0007669"/>
    <property type="project" value="UniProtKB-SubCell"/>
</dbReference>
<dbReference type="GO" id="GO:0071203">
    <property type="term" value="C:WASH complex"/>
    <property type="evidence" value="ECO:0000250"/>
    <property type="project" value="UniProtKB"/>
</dbReference>
<dbReference type="GO" id="GO:0003779">
    <property type="term" value="F:actin binding"/>
    <property type="evidence" value="ECO:0007669"/>
    <property type="project" value="UniProtKB-KW"/>
</dbReference>
<dbReference type="GO" id="GO:0043014">
    <property type="term" value="F:alpha-tubulin binding"/>
    <property type="evidence" value="ECO:0000250"/>
    <property type="project" value="UniProtKB"/>
</dbReference>
<dbReference type="GO" id="GO:0043015">
    <property type="term" value="F:gamma-tubulin binding"/>
    <property type="evidence" value="ECO:0000266"/>
    <property type="project" value="RGD"/>
</dbReference>
<dbReference type="GO" id="GO:0141039">
    <property type="term" value="F:phosphatidylinositol 3-kinase inhibitor activity"/>
    <property type="evidence" value="ECO:0000266"/>
    <property type="project" value="RGD"/>
</dbReference>
<dbReference type="GO" id="GO:0031625">
    <property type="term" value="F:ubiquitin protein ligase binding"/>
    <property type="evidence" value="ECO:0000266"/>
    <property type="project" value="RGD"/>
</dbReference>
<dbReference type="GO" id="GO:0034314">
    <property type="term" value="P:Arp2/3 complex-mediated actin nucleation"/>
    <property type="evidence" value="ECO:0000250"/>
    <property type="project" value="UniProtKB"/>
</dbReference>
<dbReference type="GO" id="GO:0002468">
    <property type="term" value="P:dendritic cell antigen processing and presentation"/>
    <property type="evidence" value="ECO:0000266"/>
    <property type="project" value="RGD"/>
</dbReference>
<dbReference type="GO" id="GO:0045022">
    <property type="term" value="P:early endosome to late endosome transport"/>
    <property type="evidence" value="ECO:0000266"/>
    <property type="project" value="RGD"/>
</dbReference>
<dbReference type="GO" id="GO:0032456">
    <property type="term" value="P:endocytic recycling"/>
    <property type="evidence" value="ECO:0000266"/>
    <property type="project" value="RGD"/>
</dbReference>
<dbReference type="GO" id="GO:0016197">
    <property type="term" value="P:endosomal transport"/>
    <property type="evidence" value="ECO:0000250"/>
    <property type="project" value="UniProtKB"/>
</dbReference>
<dbReference type="GO" id="GO:0007032">
    <property type="term" value="P:endosome organization"/>
    <property type="evidence" value="ECO:0000266"/>
    <property type="project" value="RGD"/>
</dbReference>
<dbReference type="GO" id="GO:0099638">
    <property type="term" value="P:endosome to plasma membrane protein transport"/>
    <property type="evidence" value="ECO:0000266"/>
    <property type="project" value="RGD"/>
</dbReference>
<dbReference type="GO" id="GO:0006887">
    <property type="term" value="P:exocytosis"/>
    <property type="evidence" value="ECO:0000266"/>
    <property type="project" value="RGD"/>
</dbReference>
<dbReference type="GO" id="GO:0022617">
    <property type="term" value="P:extracellular matrix disassembly"/>
    <property type="evidence" value="ECO:0000266"/>
    <property type="project" value="RGD"/>
</dbReference>
<dbReference type="GO" id="GO:0034383">
    <property type="term" value="P:low-density lipoprotein particle clearance"/>
    <property type="evidence" value="ECO:0000266"/>
    <property type="project" value="RGD"/>
</dbReference>
<dbReference type="GO" id="GO:0090306">
    <property type="term" value="P:meiotic spindle assembly"/>
    <property type="evidence" value="ECO:0000266"/>
    <property type="project" value="RGD"/>
</dbReference>
<dbReference type="GO" id="GO:0010507">
    <property type="term" value="P:negative regulation of autophagy"/>
    <property type="evidence" value="ECO:0000266"/>
    <property type="project" value="RGD"/>
</dbReference>
<dbReference type="GO" id="GO:0001556">
    <property type="term" value="P:oocyte maturation"/>
    <property type="evidence" value="ECO:0000266"/>
    <property type="project" value="RGD"/>
</dbReference>
<dbReference type="GO" id="GO:0040038">
    <property type="term" value="P:polar body extrusion after meiotic divisions"/>
    <property type="evidence" value="ECO:0000266"/>
    <property type="project" value="RGD"/>
</dbReference>
<dbReference type="GO" id="GO:0030335">
    <property type="term" value="P:positive regulation of cell migration"/>
    <property type="evidence" value="ECO:0000266"/>
    <property type="project" value="RGD"/>
</dbReference>
<dbReference type="GO" id="GO:1904109">
    <property type="term" value="P:positive regulation of cholesterol import"/>
    <property type="evidence" value="ECO:0000266"/>
    <property type="project" value="RGD"/>
</dbReference>
<dbReference type="GO" id="GO:2000010">
    <property type="term" value="P:positive regulation of protein localization to cell surface"/>
    <property type="evidence" value="ECO:0000266"/>
    <property type="project" value="RGD"/>
</dbReference>
<dbReference type="GO" id="GO:0031274">
    <property type="term" value="P:positive regulation of pseudopodium assembly"/>
    <property type="evidence" value="ECO:0000266"/>
    <property type="project" value="RGD"/>
</dbReference>
<dbReference type="GO" id="GO:0034394">
    <property type="term" value="P:protein localization to cell surface"/>
    <property type="evidence" value="ECO:0000266"/>
    <property type="project" value="RGD"/>
</dbReference>
<dbReference type="GO" id="GO:0006622">
    <property type="term" value="P:protein targeting to lysosome"/>
    <property type="evidence" value="ECO:0000266"/>
    <property type="project" value="RGD"/>
</dbReference>
<dbReference type="GO" id="GO:0030833">
    <property type="term" value="P:regulation of actin filament polymerization"/>
    <property type="evidence" value="ECO:0000266"/>
    <property type="project" value="RGD"/>
</dbReference>
<dbReference type="GO" id="GO:0050776">
    <property type="term" value="P:regulation of immune response"/>
    <property type="evidence" value="ECO:0000266"/>
    <property type="project" value="RGD"/>
</dbReference>
<dbReference type="GO" id="GO:0031396">
    <property type="term" value="P:regulation of protein ubiquitination"/>
    <property type="evidence" value="ECO:0000266"/>
    <property type="project" value="RGD"/>
</dbReference>
<dbReference type="GO" id="GO:0042147">
    <property type="term" value="P:retrograde transport, endosome to Golgi"/>
    <property type="evidence" value="ECO:0000250"/>
    <property type="project" value="UniProtKB"/>
</dbReference>
<dbReference type="GO" id="GO:0042098">
    <property type="term" value="P:T cell proliferation"/>
    <property type="evidence" value="ECO:0000266"/>
    <property type="project" value="RGD"/>
</dbReference>
<dbReference type="InterPro" id="IPR028290">
    <property type="entry name" value="WASH1"/>
</dbReference>
<dbReference type="InterPro" id="IPR021854">
    <property type="entry name" value="WASH1_WAHD"/>
</dbReference>
<dbReference type="InterPro" id="IPR003124">
    <property type="entry name" value="WH2_dom"/>
</dbReference>
<dbReference type="PANTHER" id="PTHR23331">
    <property type="entry name" value="CXYORF1"/>
    <property type="match status" value="1"/>
</dbReference>
<dbReference type="PANTHER" id="PTHR23331:SF5">
    <property type="entry name" value="WAS PROTEIN FAMILY HOMOLOG 2-RELATED"/>
    <property type="match status" value="1"/>
</dbReference>
<dbReference type="Pfam" id="PF11945">
    <property type="entry name" value="WASH_WAHD"/>
    <property type="match status" value="1"/>
</dbReference>
<dbReference type="PROSITE" id="PS51082">
    <property type="entry name" value="WH2"/>
    <property type="match status" value="1"/>
</dbReference>
<accession>B2RYF7</accession>
<proteinExistence type="evidence at transcript level"/>
<feature type="chain" id="PRO_0000390964" description="WASH complex subunit 1">
    <location>
        <begin position="1"/>
        <end position="475"/>
    </location>
</feature>
<feature type="domain" description="WH2" evidence="4">
    <location>
        <begin position="369"/>
        <end position="391"/>
    </location>
</feature>
<feature type="region of interest" description="WHD1">
    <location>
        <begin position="1"/>
        <end position="167"/>
    </location>
</feature>
<feature type="region of interest" description="Required for WASH complex assembly" evidence="2">
    <location>
        <begin position="1"/>
        <end position="54"/>
    </location>
</feature>
<feature type="region of interest" description="Disordered" evidence="5">
    <location>
        <begin position="296"/>
        <end position="475"/>
    </location>
</feature>
<feature type="region of interest" description="VCA" evidence="2">
    <location>
        <begin position="357"/>
        <end position="475"/>
    </location>
</feature>
<feature type="compositionally biased region" description="Pro residues" evidence="5">
    <location>
        <begin position="302"/>
        <end position="318"/>
    </location>
</feature>
<feature type="compositionally biased region" description="Basic and acidic residues" evidence="5">
    <location>
        <begin position="390"/>
        <end position="406"/>
    </location>
</feature>
<feature type="compositionally biased region" description="Gly residues" evidence="5">
    <location>
        <begin position="432"/>
        <end position="446"/>
    </location>
</feature>
<feature type="compositionally biased region" description="Acidic residues" evidence="5">
    <location>
        <begin position="466"/>
        <end position="475"/>
    </location>
</feature>
<feature type="cross-link" description="Glycyl lysine isopeptide (Lys-Gly) (interchain with G-Cter in ubiquitin)" evidence="1">
    <location>
        <position position="219"/>
    </location>
</feature>
<sequence length="475" mass="51327">MTAVKTQHSLAGQVYAVPLIQPDLRREEAIQQVADALQYLQNISGDIFSRISQRVELSRRQLQAIGERVSLAQAKIEKIKGSKKAIKVFSSAKYPAPEHLQEYNSVFTGALDPGLQRRPRYRIQSKHRPLDERALQEKLKYFPVCVSTKSEPEDEAEEGLGGLPSNISSISSLLLFNTTENLYKKYVFLDPLAGAVTKTHTMLGTEEEKLFDAPLSISKREQLEQPAPENYFYVPGLGQVPEIDVPSYLPDLPGVADDLMYSADLGPGIAPSAPGAIPELPAFHTEVAEPFQPEREDGALLAPPPPPPPPPPPPPPAPTAVVSAPQPPMSPDVVTVTGKVAREEDSGSGEAHSASVQGAPKEVVDPSSGRATLLESIRQAGGIGKAKLRSVKERKLEKKKQKEQEQVRATSQGGDLMSDLFNKLVMRRKGISGKGPGTGTSEGPGGAFSRMSDSIPPLPPPQQPAGDEDEDDWES</sequence>
<gene>
    <name evidence="7" type="primary">Washc1</name>
    <name type="synonym">Wash1</name>
    <name type="synonym">Wash2</name>
</gene>
<keyword id="KW-0009">Actin-binding</keyword>
<keyword id="KW-0967">Endosome</keyword>
<keyword id="KW-1017">Isopeptide bond</keyword>
<keyword id="KW-0472">Membrane</keyword>
<keyword id="KW-0653">Protein transport</keyword>
<keyword id="KW-1185">Reference proteome</keyword>
<keyword id="KW-0813">Transport</keyword>
<keyword id="KW-0832">Ubl conjugation</keyword>
<comment type="function">
    <text evidence="1 2 3">Acts as a component of the WASH core complex that functions as a nucleation-promoting factor (NPF) at the surface of endosomes, where it recruits and activates the Arp2/3 complex to induce actin polymerization, playing a key role in the fission of tubules that serve as transport intermediates during endosome sorting. Regulates the trafficking of endosomal alpha5beta1 integrin to the plasma membrane and involved in invasive cell migration. In T-cells involved in endosome-to-membrane recycling of receptors including T-cell receptor (TCR), CD28 and ITGAL; proposed to be implicated in T-cell proliferation and effector function. In dendritic cells involved in endosome-to-membrane recycling of major histocompatibility complex (MHC) class II probably involving retromer and subsequently allowing antigen sampling, loading and presentation during T-cell activation. Involved in cytokinesis and following polar body extrusion during oocyte meiotic maturation. Involved in Arp2/3 complex-dependent actin assembly driving Salmonella typhimurium invasion independent of ruffling. Involved in the exocytosis of MMP14 leading to matrix remodeling during invasive migration and implicating late endosome-to-plasma membrane tubular connections and cooperation with the exocyst complex. Involved in negative regulation of autophagy independently from its role in endosomal sorting by inhibiting BECN1 ubiquitination to inactivate PIK3C3/Vps34 activity.</text>
</comment>
<comment type="subunit">
    <text evidence="1 2 3">Component of the WASH core complex also described as WASH regulatory complex SHRC composed of WASHC1, WASHC2, WASHC3, WASHC4 and WASHC5. The WASH core complex associates with the F-actin-capping protein dimer (formed by CAPZA1, CAPZA2 or CAPZA3 and CAPZB) in a transient or substoichiometric manner which was initially described as WASH complex. Interacts (via WHD1 region) with WASHC2; the interaction is direct. Interacts with BECN1; WASHC1 and AMBRA1 can competitively interact with BECN1. Interacts with BLOC1S2; may associate with the BLOC-1 complex. Interacts with tubulin gamma chain (TUBG1 or TUBG2). Interacts with TBC1D23 (By similarity).</text>
</comment>
<comment type="subcellular location">
    <subcellularLocation>
        <location evidence="3">Early endosome membrane</location>
    </subcellularLocation>
    <subcellularLocation>
        <location evidence="3">Recycling endosome membrane</location>
    </subcellularLocation>
    <text evidence="1 3">Localization to the endosome membrane is mediated via its interaction with WASHC2. Localized to Salmonella typhimurium entry sites (By similarity).</text>
</comment>
<comment type="domain">
    <text evidence="2">The VCA (verprolin, cofilin, acidic) domain promotes actin polymerization by the Arp2/3 complex in vitro.</text>
</comment>
<comment type="PTM">
    <text evidence="1">Ubiquitinated at Lys-219 via 'Lys-63'-linked ubiquitin chains by the TRIM27:MAGEL2 E3 ubiquitin ligase complex, leading to promote endosomal F-actin assembly.</text>
</comment>
<comment type="similarity">
    <text evidence="6">Belongs to the WASH1 family.</text>
</comment>
<name>WASH1_RAT</name>